<organism>
    <name type="scientific">Phoneutria nigriventer</name>
    <name type="common">Brazilian armed spider</name>
    <name type="synonym">Ctenus nigriventer</name>
    <dbReference type="NCBI Taxonomy" id="6918"/>
    <lineage>
        <taxon>Eukaryota</taxon>
        <taxon>Metazoa</taxon>
        <taxon>Ecdysozoa</taxon>
        <taxon>Arthropoda</taxon>
        <taxon>Chelicerata</taxon>
        <taxon>Arachnida</taxon>
        <taxon>Araneae</taxon>
        <taxon>Araneomorphae</taxon>
        <taxon>Entelegynae</taxon>
        <taxon>Lycosoidea</taxon>
        <taxon>Ctenidae</taxon>
        <taxon>Phoneutria</taxon>
    </lineage>
</organism>
<dbReference type="GO" id="GO:0005576">
    <property type="term" value="C:extracellular region"/>
    <property type="evidence" value="ECO:0000314"/>
    <property type="project" value="UniProtKB"/>
</dbReference>
<proteinExistence type="evidence at protein level"/>
<reference evidence="4" key="1">
    <citation type="journal article" date="2005" name="Rapid Commun. Mass Spectrom.">
        <title>Electrospray ionization quadrupole time-of-flight and matrix-assisted laser desorption/ionization tandem time-of-flight mass spectrometric analyses to solve micro-heterogeneity in post-translationally modified peptides from Phoneutria nigriventer (Aranea, Ctenidae) venom.</title>
        <authorList>
            <person name="Pimenta A.M.C."/>
            <person name="Rates B."/>
            <person name="Bloch C. Jr."/>
            <person name="Gomes P.C."/>
            <person name="Santoro M.M."/>
            <person name="de Lima M.E."/>
            <person name="Richardson M."/>
            <person name="Cordeiro M.N."/>
        </authorList>
    </citation>
    <scope>PROTEIN SEQUENCE</scope>
    <scope>SUBCELLULAR LOCATION</scope>
    <scope>TISSUE SPECIFICITY</scope>
    <scope>MASS SPECTROMETRY</scope>
    <scope>PYROGLUTAMATE FORMATION AT GLN-1</scope>
    <source>
        <tissue evidence="2">Venom</tissue>
    </source>
</reference>
<sequence>QKKDKKDK</sequence>
<accession>P86299</accession>
<evidence type="ECO:0000255" key="1"/>
<evidence type="ECO:0000269" key="2">
    <source>
    </source>
</evidence>
<evidence type="ECO:0000303" key="3">
    <source>
    </source>
</evidence>
<evidence type="ECO:0000305" key="4"/>
<evidence type="ECO:0000305" key="5">
    <source>
    </source>
</evidence>
<comment type="subcellular location">
    <subcellularLocation>
        <location evidence="2">Secreted</location>
    </subcellularLocation>
</comment>
<comment type="tissue specificity">
    <text evidence="2">Expressed by the venom gland.</text>
</comment>
<comment type="mass spectrometry"/>
<comment type="similarity">
    <text evidence="1">Belongs to the tachykinin family.</text>
</comment>
<keyword id="KW-0903">Direct protein sequencing</keyword>
<keyword id="KW-0873">Pyrrolidone carboxylic acid</keyword>
<keyword id="KW-0964">Secreted</keyword>
<name>TLP2_PHONI</name>
<feature type="peptide" id="PRO_0000402812" description="Tachykinin-like peptide-II" evidence="2">
    <location>
        <begin position="1"/>
        <end position="8"/>
    </location>
</feature>
<feature type="modified residue" description="Pyrrolidone carboxylic acid" evidence="2">
    <location>
        <position position="1"/>
    </location>
</feature>
<protein>
    <recommendedName>
        <fullName evidence="5">Tachykinin-like peptide-II</fullName>
    </recommendedName>
    <alternativeName>
        <fullName evidence="3">P.nigriventer tachykinin peptides II</fullName>
        <shortName evidence="3">PnTkP-II</shortName>
    </alternativeName>
    <alternativeName>
        <fullName evidence="4">U29-ctenitoxin-Pn1b</fullName>
        <shortName evidence="4">U29-CNTX-Pn1b</shortName>
    </alternativeName>
</protein>